<gene>
    <name type="ordered locus">TWT_721</name>
</gene>
<organism>
    <name type="scientific">Tropheryma whipplei (strain Twist)</name>
    <name type="common">Whipple's bacillus</name>
    <dbReference type="NCBI Taxonomy" id="203267"/>
    <lineage>
        <taxon>Bacteria</taxon>
        <taxon>Bacillati</taxon>
        <taxon>Actinomycetota</taxon>
        <taxon>Actinomycetes</taxon>
        <taxon>Micrococcales</taxon>
        <taxon>Tropherymataceae</taxon>
        <taxon>Tropheryma</taxon>
    </lineage>
</organism>
<name>Y721_TROWT</name>
<sequence length="140" mass="15717">MTQKVEFPPRHVTEEKLMEFARAVHTQNKIYHSTAAATSSGYPGLVAVPTFGAVWVGQILEYIISSDLNIDYSHIVHGEQHFLYKRPIFAGDILRPILRIKRDRAFGNARQIVLEVTLLSEGSNDDVLVMTITLIVRGKA</sequence>
<accession>Q83FK2</accession>
<keyword id="KW-1185">Reference proteome</keyword>
<comment type="similarity">
    <text evidence="1">Belongs to the UPF0336 family.</text>
</comment>
<feature type="chain" id="PRO_0000216149" description="UPF0336 protein TWT_721">
    <location>
        <begin position="1"/>
        <end position="140"/>
    </location>
</feature>
<dbReference type="EMBL" id="AE014184">
    <property type="protein sequence ID" value="AAO44818.1"/>
    <property type="molecule type" value="Genomic_DNA"/>
</dbReference>
<dbReference type="RefSeq" id="WP_011096673.1">
    <property type="nucleotide sequence ID" value="NC_004572.3"/>
</dbReference>
<dbReference type="SMR" id="Q83FK2"/>
<dbReference type="STRING" id="203267.TWT_721"/>
<dbReference type="KEGG" id="twh:TWT_721"/>
<dbReference type="eggNOG" id="COG2030">
    <property type="taxonomic scope" value="Bacteria"/>
</dbReference>
<dbReference type="HOGENOM" id="CLU_116276_1_1_11"/>
<dbReference type="OrthoDB" id="5415111at2"/>
<dbReference type="Proteomes" id="UP000002200">
    <property type="component" value="Chromosome"/>
</dbReference>
<dbReference type="CDD" id="cd03441">
    <property type="entry name" value="R_hydratase_like"/>
    <property type="match status" value="1"/>
</dbReference>
<dbReference type="Gene3D" id="3.10.129.10">
    <property type="entry name" value="Hotdog Thioesterase"/>
    <property type="match status" value="1"/>
</dbReference>
<dbReference type="HAMAP" id="MF_00799">
    <property type="entry name" value="UPF0336"/>
    <property type="match status" value="1"/>
</dbReference>
<dbReference type="InterPro" id="IPR039569">
    <property type="entry name" value="FAS1-like_DH_region"/>
</dbReference>
<dbReference type="InterPro" id="IPR016709">
    <property type="entry name" value="HadA-like"/>
</dbReference>
<dbReference type="InterPro" id="IPR029069">
    <property type="entry name" value="HotDog_dom_sf"/>
</dbReference>
<dbReference type="Pfam" id="PF13452">
    <property type="entry name" value="FAS1_DH_region"/>
    <property type="match status" value="1"/>
</dbReference>
<dbReference type="PIRSF" id="PIRSF018072">
    <property type="entry name" value="UCP018072"/>
    <property type="match status" value="1"/>
</dbReference>
<dbReference type="SUPFAM" id="SSF54637">
    <property type="entry name" value="Thioesterase/thiol ester dehydrase-isomerase"/>
    <property type="match status" value="1"/>
</dbReference>
<evidence type="ECO:0000255" key="1">
    <source>
        <dbReference type="HAMAP-Rule" id="MF_00799"/>
    </source>
</evidence>
<proteinExistence type="inferred from homology"/>
<protein>
    <recommendedName>
        <fullName evidence="1">UPF0336 protein TWT_721</fullName>
    </recommendedName>
</protein>
<reference key="1">
    <citation type="journal article" date="2003" name="Genome Res.">
        <title>Tropheryma whipplei twist: a human pathogenic Actinobacteria with a reduced genome.</title>
        <authorList>
            <person name="Raoult D."/>
            <person name="Ogata H."/>
            <person name="Audic S."/>
            <person name="Robert C."/>
            <person name="Suhre K."/>
            <person name="Drancourt M."/>
            <person name="Claverie J.-M."/>
        </authorList>
    </citation>
    <scope>NUCLEOTIDE SEQUENCE [LARGE SCALE GENOMIC DNA]</scope>
    <source>
        <strain>Twist</strain>
    </source>
</reference>